<evidence type="ECO:0000255" key="1">
    <source>
        <dbReference type="HAMAP-Rule" id="MF_01401"/>
    </source>
</evidence>
<feature type="chain" id="PRO_1000068328" description="Peptide methionine sulfoxide reductase MsrA">
    <location>
        <begin position="1"/>
        <end position="212"/>
    </location>
</feature>
<feature type="active site" evidence="1">
    <location>
        <position position="52"/>
    </location>
</feature>
<keyword id="KW-0560">Oxidoreductase</keyword>
<keyword id="KW-1185">Reference proteome</keyword>
<gene>
    <name evidence="1" type="primary">msrA</name>
    <name type="ordered locus">ESA_00225</name>
</gene>
<sequence length="212" mass="23511">MSFFDKKQMITEEEALPGRNTRMPVAALHTVTGHSMTNVPEGMEVALFAMGCFWGVERLFWALPGVYSTAAGYTGGYTPNPTYREVCSGQTGHAEAVRVVYDPNVISYEQLLQVFWENHDPAQGMRQGNDVGTQYRSAIYPLTPEQEAAAQASLERFRAAMEAAGDYRHITTEIAPAKPFYYAEDEHQQYLHKNPYGYCGIGGIGVCLPPEA</sequence>
<organism>
    <name type="scientific">Cronobacter sakazakii (strain ATCC BAA-894)</name>
    <name type="common">Enterobacter sakazakii</name>
    <dbReference type="NCBI Taxonomy" id="290339"/>
    <lineage>
        <taxon>Bacteria</taxon>
        <taxon>Pseudomonadati</taxon>
        <taxon>Pseudomonadota</taxon>
        <taxon>Gammaproteobacteria</taxon>
        <taxon>Enterobacterales</taxon>
        <taxon>Enterobacteriaceae</taxon>
        <taxon>Cronobacter</taxon>
    </lineage>
</organism>
<comment type="function">
    <text evidence="1">Has an important function as a repair enzyme for proteins that have been inactivated by oxidation. Catalyzes the reversible oxidation-reduction of methionine sulfoxide in proteins to methionine.</text>
</comment>
<comment type="catalytic activity">
    <reaction evidence="1">
        <text>L-methionyl-[protein] + [thioredoxin]-disulfide + H2O = L-methionyl-(S)-S-oxide-[protein] + [thioredoxin]-dithiol</text>
        <dbReference type="Rhea" id="RHEA:14217"/>
        <dbReference type="Rhea" id="RHEA-COMP:10698"/>
        <dbReference type="Rhea" id="RHEA-COMP:10700"/>
        <dbReference type="Rhea" id="RHEA-COMP:12313"/>
        <dbReference type="Rhea" id="RHEA-COMP:12315"/>
        <dbReference type="ChEBI" id="CHEBI:15377"/>
        <dbReference type="ChEBI" id="CHEBI:16044"/>
        <dbReference type="ChEBI" id="CHEBI:29950"/>
        <dbReference type="ChEBI" id="CHEBI:44120"/>
        <dbReference type="ChEBI" id="CHEBI:50058"/>
        <dbReference type="EC" id="1.8.4.11"/>
    </reaction>
</comment>
<comment type="catalytic activity">
    <reaction evidence="1">
        <text>[thioredoxin]-disulfide + L-methionine + H2O = L-methionine (S)-S-oxide + [thioredoxin]-dithiol</text>
        <dbReference type="Rhea" id="RHEA:19993"/>
        <dbReference type="Rhea" id="RHEA-COMP:10698"/>
        <dbReference type="Rhea" id="RHEA-COMP:10700"/>
        <dbReference type="ChEBI" id="CHEBI:15377"/>
        <dbReference type="ChEBI" id="CHEBI:29950"/>
        <dbReference type="ChEBI" id="CHEBI:50058"/>
        <dbReference type="ChEBI" id="CHEBI:57844"/>
        <dbReference type="ChEBI" id="CHEBI:58772"/>
        <dbReference type="EC" id="1.8.4.11"/>
    </reaction>
</comment>
<comment type="similarity">
    <text evidence="1">Belongs to the MsrA Met sulfoxide reductase family.</text>
</comment>
<reference key="1">
    <citation type="journal article" date="2010" name="PLoS ONE">
        <title>Genome sequence of Cronobacter sakazakii BAA-894 and comparative genomic hybridization analysis with other Cronobacter species.</title>
        <authorList>
            <person name="Kucerova E."/>
            <person name="Clifton S.W."/>
            <person name="Xia X.Q."/>
            <person name="Long F."/>
            <person name="Porwollik S."/>
            <person name="Fulton L."/>
            <person name="Fronick C."/>
            <person name="Minx P."/>
            <person name="Kyung K."/>
            <person name="Warren W."/>
            <person name="Fulton R."/>
            <person name="Feng D."/>
            <person name="Wollam A."/>
            <person name="Shah N."/>
            <person name="Bhonagiri V."/>
            <person name="Nash W.E."/>
            <person name="Hallsworth-Pepin K."/>
            <person name="Wilson R.K."/>
            <person name="McClelland M."/>
            <person name="Forsythe S.J."/>
        </authorList>
    </citation>
    <scope>NUCLEOTIDE SEQUENCE [LARGE SCALE GENOMIC DNA]</scope>
    <source>
        <strain>ATCC BAA-894</strain>
    </source>
</reference>
<dbReference type="EC" id="1.8.4.11" evidence="1"/>
<dbReference type="EMBL" id="CP000783">
    <property type="protein sequence ID" value="ABU75526.1"/>
    <property type="molecule type" value="Genomic_DNA"/>
</dbReference>
<dbReference type="RefSeq" id="WP_007887408.1">
    <property type="nucleotide sequence ID" value="NC_009778.1"/>
</dbReference>
<dbReference type="SMR" id="A7MM56"/>
<dbReference type="GeneID" id="56733201"/>
<dbReference type="KEGG" id="esa:ESA_00225"/>
<dbReference type="HOGENOM" id="CLU_031040_10_3_6"/>
<dbReference type="Proteomes" id="UP000000260">
    <property type="component" value="Chromosome"/>
</dbReference>
<dbReference type="GO" id="GO:0005737">
    <property type="term" value="C:cytoplasm"/>
    <property type="evidence" value="ECO:0007669"/>
    <property type="project" value="TreeGrafter"/>
</dbReference>
<dbReference type="GO" id="GO:0036456">
    <property type="term" value="F:L-methionine-(S)-S-oxide reductase activity"/>
    <property type="evidence" value="ECO:0007669"/>
    <property type="project" value="TreeGrafter"/>
</dbReference>
<dbReference type="GO" id="GO:0008113">
    <property type="term" value="F:peptide-methionine (S)-S-oxide reductase activity"/>
    <property type="evidence" value="ECO:0007669"/>
    <property type="project" value="UniProtKB-UniRule"/>
</dbReference>
<dbReference type="GO" id="GO:0034599">
    <property type="term" value="P:cellular response to oxidative stress"/>
    <property type="evidence" value="ECO:0007669"/>
    <property type="project" value="TreeGrafter"/>
</dbReference>
<dbReference type="GO" id="GO:0036211">
    <property type="term" value="P:protein modification process"/>
    <property type="evidence" value="ECO:0007669"/>
    <property type="project" value="UniProtKB-UniRule"/>
</dbReference>
<dbReference type="FunFam" id="3.30.1060.10:FF:000001">
    <property type="entry name" value="Peptide methionine sulfoxide reductase MsrA"/>
    <property type="match status" value="1"/>
</dbReference>
<dbReference type="Gene3D" id="3.30.1060.10">
    <property type="entry name" value="Peptide methionine sulphoxide reductase MsrA"/>
    <property type="match status" value="1"/>
</dbReference>
<dbReference type="HAMAP" id="MF_01401">
    <property type="entry name" value="MsrA"/>
    <property type="match status" value="1"/>
</dbReference>
<dbReference type="InterPro" id="IPR002569">
    <property type="entry name" value="Met_Sox_Rdtase_MsrA_dom"/>
</dbReference>
<dbReference type="InterPro" id="IPR036509">
    <property type="entry name" value="Met_Sox_Rdtase_MsrA_sf"/>
</dbReference>
<dbReference type="InterPro" id="IPR050162">
    <property type="entry name" value="MsrA_MetSO_reductase"/>
</dbReference>
<dbReference type="NCBIfam" id="TIGR00401">
    <property type="entry name" value="msrA"/>
    <property type="match status" value="1"/>
</dbReference>
<dbReference type="PANTHER" id="PTHR42799">
    <property type="entry name" value="MITOCHONDRIAL PEPTIDE METHIONINE SULFOXIDE REDUCTASE"/>
    <property type="match status" value="1"/>
</dbReference>
<dbReference type="PANTHER" id="PTHR42799:SF2">
    <property type="entry name" value="MITOCHONDRIAL PEPTIDE METHIONINE SULFOXIDE REDUCTASE"/>
    <property type="match status" value="1"/>
</dbReference>
<dbReference type="Pfam" id="PF01625">
    <property type="entry name" value="PMSR"/>
    <property type="match status" value="1"/>
</dbReference>
<dbReference type="SUPFAM" id="SSF55068">
    <property type="entry name" value="Peptide methionine sulfoxide reductase"/>
    <property type="match status" value="1"/>
</dbReference>
<protein>
    <recommendedName>
        <fullName evidence="1">Peptide methionine sulfoxide reductase MsrA</fullName>
        <shortName evidence="1">Protein-methionine-S-oxide reductase</shortName>
        <ecNumber evidence="1">1.8.4.11</ecNumber>
    </recommendedName>
    <alternativeName>
        <fullName evidence="1">Peptide-methionine (S)-S-oxide reductase</fullName>
        <shortName evidence="1">Peptide Met(O) reductase</shortName>
    </alternativeName>
</protein>
<proteinExistence type="inferred from homology"/>
<accession>A7MM56</accession>
<name>MSRA_CROS8</name>